<gene>
    <name type="primary">PCMP-E39</name>
    <name type="ordered locus">At2g46050</name>
    <name type="ORF">T3F17.30</name>
</gene>
<protein>
    <recommendedName>
        <fullName>Pentatricopeptide repeat-containing protein At2g46050, mitochondrial</fullName>
    </recommendedName>
</protein>
<reference key="1">
    <citation type="journal article" date="1999" name="Nature">
        <title>Sequence and analysis of chromosome 2 of the plant Arabidopsis thaliana.</title>
        <authorList>
            <person name="Lin X."/>
            <person name="Kaul S."/>
            <person name="Rounsley S.D."/>
            <person name="Shea T.P."/>
            <person name="Benito M.-I."/>
            <person name="Town C.D."/>
            <person name="Fujii C.Y."/>
            <person name="Mason T.M."/>
            <person name="Bowman C.L."/>
            <person name="Barnstead M.E."/>
            <person name="Feldblyum T.V."/>
            <person name="Buell C.R."/>
            <person name="Ketchum K.A."/>
            <person name="Lee J.J."/>
            <person name="Ronning C.M."/>
            <person name="Koo H.L."/>
            <person name="Moffat K.S."/>
            <person name="Cronin L.A."/>
            <person name="Shen M."/>
            <person name="Pai G."/>
            <person name="Van Aken S."/>
            <person name="Umayam L."/>
            <person name="Tallon L.J."/>
            <person name="Gill J.E."/>
            <person name="Adams M.D."/>
            <person name="Carrera A.J."/>
            <person name="Creasy T.H."/>
            <person name="Goodman H.M."/>
            <person name="Somerville C.R."/>
            <person name="Copenhaver G.P."/>
            <person name="Preuss D."/>
            <person name="Nierman W.C."/>
            <person name="White O."/>
            <person name="Eisen J.A."/>
            <person name="Salzberg S.L."/>
            <person name="Fraser C.M."/>
            <person name="Venter J.C."/>
        </authorList>
    </citation>
    <scope>NUCLEOTIDE SEQUENCE [LARGE SCALE GENOMIC DNA]</scope>
    <source>
        <strain>cv. Columbia</strain>
    </source>
</reference>
<reference key="2">
    <citation type="journal article" date="2017" name="Plant J.">
        <title>Araport11: a complete reannotation of the Arabidopsis thaliana reference genome.</title>
        <authorList>
            <person name="Cheng C.Y."/>
            <person name="Krishnakumar V."/>
            <person name="Chan A.P."/>
            <person name="Thibaud-Nissen F."/>
            <person name="Schobel S."/>
            <person name="Town C.D."/>
        </authorList>
    </citation>
    <scope>GENOME REANNOTATION</scope>
    <source>
        <strain>cv. Columbia</strain>
    </source>
</reference>
<reference key="3">
    <citation type="journal article" date="2000" name="Plant Mol. Biol.">
        <title>In Arabidopsis thaliana, 1% of the genome codes for a novel protein family unique to plants.</title>
        <authorList>
            <person name="Aubourg S."/>
            <person name="Boudet N."/>
            <person name="Kreis M."/>
            <person name="Lecharny A."/>
        </authorList>
    </citation>
    <scope>GENE FAMILY</scope>
</reference>
<reference key="4">
    <citation type="journal article" date="2004" name="Plant Cell">
        <title>Genome-wide analysis of Arabidopsis pentatricopeptide repeat proteins reveals their essential role in organelle biogenesis.</title>
        <authorList>
            <person name="Lurin C."/>
            <person name="Andres C."/>
            <person name="Aubourg S."/>
            <person name="Bellaoui M."/>
            <person name="Bitton F."/>
            <person name="Bruyere C."/>
            <person name="Caboche M."/>
            <person name="Debast C."/>
            <person name="Gualberto J."/>
            <person name="Hoffmann B."/>
            <person name="Lecharny A."/>
            <person name="Le Ret M."/>
            <person name="Martin-Magniette M.-L."/>
            <person name="Mireau H."/>
            <person name="Peeters N."/>
            <person name="Renou J.-P."/>
            <person name="Szurek B."/>
            <person name="Taconnat L."/>
            <person name="Small I."/>
        </authorList>
    </citation>
    <scope>GENE FAMILY</scope>
</reference>
<keyword id="KW-0496">Mitochondrion</keyword>
<keyword id="KW-1185">Reference proteome</keyword>
<keyword id="KW-0677">Repeat</keyword>
<keyword id="KW-0809">Transit peptide</keyword>
<proteinExistence type="inferred from homology"/>
<sequence>MRFTFLRSTRIFLANHQNHLSSLQNIRTIPSSSSSPVAISSVSKLSASLDHLSDVKQEHGFMVKQGIYNSLFLQNKLLQAYTKIREFDDADKLFDEMPLRNIVTWNILIHGVIQRDGDTNHRAHLGFCYLSRILFTDVSLDHVSFMGLIRLCTDSTNMKAGIQLHCLMVKQGLESSCFPSTSLVHFYGKCGLIVEARRVFEAVLDRDLVLWNALVSSYVLNGMIDEAFGLLKLMGSDKNRFRGDYFTFSSLLSACRIEQGKQIHAILFKVSYQFDIPVATALLNMYAKSNHLSDARECFESMVVRNVVSWNAMIVGFAQNGEGREAMRLFGQMLLENLQPDELTFASVLSSCAKFSAIWEIKQVQAMVTKKGSADFLSVANSLISSYSRNGNLSEALLCFHSIREPDLVSWTSVIGALASHGFAEESLQMFESMLQKLQPDKITFLEVLSACSHGGLVQEGLRCFKRMTEFYKIEAEDEHYTCLIDLLGRAGFIDEASDVLNSMPTEPSTHALAAFTGGCNIHEKRESMKWGAKKLLEIEPTKPVNYSILSNAYVSEGHWNQAALLRKRERRNCYNPKTPGCSWLGDYSI</sequence>
<accession>O82363</accession>
<name>PP203_ARATH</name>
<comment type="subcellular location">
    <subcellularLocation>
        <location evidence="2">Mitochondrion</location>
    </subcellularLocation>
</comment>
<comment type="similarity">
    <text evidence="2">Belongs to the PPR family. PCMP-E subfamily.</text>
</comment>
<comment type="online information" name="Pentatricopeptide repeat proteins">
    <link uri="https://ppr.plantenergy.uwa.edu.au"/>
</comment>
<dbReference type="EMBL" id="AC005397">
    <property type="protein sequence ID" value="AAC62898.1"/>
    <property type="molecule type" value="Genomic_DNA"/>
</dbReference>
<dbReference type="EMBL" id="CP002685">
    <property type="protein sequence ID" value="AEC10636.1"/>
    <property type="molecule type" value="Genomic_DNA"/>
</dbReference>
<dbReference type="PIR" id="B84898">
    <property type="entry name" value="B84898"/>
</dbReference>
<dbReference type="RefSeq" id="NP_182129.1">
    <property type="nucleotide sequence ID" value="NM_130168.1"/>
</dbReference>
<dbReference type="SMR" id="O82363"/>
<dbReference type="FunCoup" id="O82363">
    <property type="interactions" value="1"/>
</dbReference>
<dbReference type="PaxDb" id="3702-AT2G46050.1"/>
<dbReference type="EnsemblPlants" id="AT2G46050.1">
    <property type="protein sequence ID" value="AT2G46050.1"/>
    <property type="gene ID" value="AT2G46050"/>
</dbReference>
<dbReference type="GeneID" id="819213"/>
<dbReference type="Gramene" id="AT2G46050.1">
    <property type="protein sequence ID" value="AT2G46050.1"/>
    <property type="gene ID" value="AT2G46050"/>
</dbReference>
<dbReference type="KEGG" id="ath:AT2G46050"/>
<dbReference type="Araport" id="AT2G46050"/>
<dbReference type="TAIR" id="AT2G46050">
    <property type="gene designation" value="MEF31"/>
</dbReference>
<dbReference type="eggNOG" id="KOG4197">
    <property type="taxonomic scope" value="Eukaryota"/>
</dbReference>
<dbReference type="HOGENOM" id="CLU_002706_0_1_1"/>
<dbReference type="InParanoid" id="O82363"/>
<dbReference type="OMA" id="TQVHAYA"/>
<dbReference type="OrthoDB" id="1851890at2759"/>
<dbReference type="PhylomeDB" id="O82363"/>
<dbReference type="PRO" id="PR:O82363"/>
<dbReference type="Proteomes" id="UP000006548">
    <property type="component" value="Chromosome 2"/>
</dbReference>
<dbReference type="ExpressionAtlas" id="O82363">
    <property type="expression patterns" value="baseline and differential"/>
</dbReference>
<dbReference type="GO" id="GO:0005739">
    <property type="term" value="C:mitochondrion"/>
    <property type="evidence" value="ECO:0000314"/>
    <property type="project" value="TAIR"/>
</dbReference>
<dbReference type="GO" id="GO:0003723">
    <property type="term" value="F:RNA binding"/>
    <property type="evidence" value="ECO:0007669"/>
    <property type="project" value="InterPro"/>
</dbReference>
<dbReference type="GO" id="GO:0080156">
    <property type="term" value="P:mitochondrial mRNA modification"/>
    <property type="evidence" value="ECO:0000315"/>
    <property type="project" value="TAIR"/>
</dbReference>
<dbReference type="GO" id="GO:0000963">
    <property type="term" value="P:mitochondrial RNA processing"/>
    <property type="evidence" value="ECO:0000315"/>
    <property type="project" value="TAIR"/>
</dbReference>
<dbReference type="FunFam" id="1.25.40.10:FF:000518">
    <property type="entry name" value="Pentatricopeptide repeat-containing protein"/>
    <property type="match status" value="1"/>
</dbReference>
<dbReference type="FunFam" id="1.25.40.10:FF:002548">
    <property type="entry name" value="Pentatricopeptide repeat-containing protein At2g46050, mitochondrial"/>
    <property type="match status" value="1"/>
</dbReference>
<dbReference type="FunFam" id="1.25.40.10:FF:003122">
    <property type="entry name" value="Pentatricopeptide repeat-containing protein At2g46050, mitochondrial"/>
    <property type="match status" value="1"/>
</dbReference>
<dbReference type="FunFam" id="1.25.40.10:FF:003179">
    <property type="entry name" value="Pentatricopeptide repeat-containing protein At2g46050, mitochondrial"/>
    <property type="match status" value="1"/>
</dbReference>
<dbReference type="Gene3D" id="1.25.40.10">
    <property type="entry name" value="Tetratricopeptide repeat domain"/>
    <property type="match status" value="4"/>
</dbReference>
<dbReference type="InterPro" id="IPR046848">
    <property type="entry name" value="E_motif"/>
</dbReference>
<dbReference type="InterPro" id="IPR002885">
    <property type="entry name" value="Pentatricopeptide_rpt"/>
</dbReference>
<dbReference type="InterPro" id="IPR046960">
    <property type="entry name" value="PPR_At4g14850-like_plant"/>
</dbReference>
<dbReference type="InterPro" id="IPR011990">
    <property type="entry name" value="TPR-like_helical_dom_sf"/>
</dbReference>
<dbReference type="NCBIfam" id="TIGR00756">
    <property type="entry name" value="PPR"/>
    <property type="match status" value="5"/>
</dbReference>
<dbReference type="PANTHER" id="PTHR24015">
    <property type="entry name" value="OS07G0578800 PROTEIN-RELATED"/>
    <property type="match status" value="1"/>
</dbReference>
<dbReference type="PANTHER" id="PTHR24015:SF548">
    <property type="entry name" value="OS08G0340900 PROTEIN"/>
    <property type="match status" value="1"/>
</dbReference>
<dbReference type="Pfam" id="PF20431">
    <property type="entry name" value="E_motif"/>
    <property type="match status" value="1"/>
</dbReference>
<dbReference type="Pfam" id="PF01535">
    <property type="entry name" value="PPR"/>
    <property type="match status" value="7"/>
</dbReference>
<dbReference type="Pfam" id="PF13041">
    <property type="entry name" value="PPR_2"/>
    <property type="match status" value="1"/>
</dbReference>
<dbReference type="PROSITE" id="PS51375">
    <property type="entry name" value="PPR"/>
    <property type="match status" value="12"/>
</dbReference>
<evidence type="ECO:0000255" key="1"/>
<evidence type="ECO:0000305" key="2"/>
<organism>
    <name type="scientific">Arabidopsis thaliana</name>
    <name type="common">Mouse-ear cress</name>
    <dbReference type="NCBI Taxonomy" id="3702"/>
    <lineage>
        <taxon>Eukaryota</taxon>
        <taxon>Viridiplantae</taxon>
        <taxon>Streptophyta</taxon>
        <taxon>Embryophyta</taxon>
        <taxon>Tracheophyta</taxon>
        <taxon>Spermatophyta</taxon>
        <taxon>Magnoliopsida</taxon>
        <taxon>eudicotyledons</taxon>
        <taxon>Gunneridae</taxon>
        <taxon>Pentapetalae</taxon>
        <taxon>rosids</taxon>
        <taxon>malvids</taxon>
        <taxon>Brassicales</taxon>
        <taxon>Brassicaceae</taxon>
        <taxon>Camelineae</taxon>
        <taxon>Arabidopsis</taxon>
    </lineage>
</organism>
<feature type="transit peptide" description="Mitochondrion" evidence="1">
    <location>
        <begin position="1"/>
        <end position="109"/>
    </location>
</feature>
<feature type="chain" id="PRO_0000356062" description="Pentatricopeptide repeat-containing protein At2g46050, mitochondrial">
    <location>
        <begin position="110"/>
        <end position="590"/>
    </location>
</feature>
<feature type="repeat" description="PPR 1">
    <location>
        <begin position="141"/>
        <end position="175"/>
    </location>
</feature>
<feature type="repeat" description="PPR 2">
    <location>
        <begin position="176"/>
        <end position="206"/>
    </location>
</feature>
<feature type="repeat" description="PPR 3">
    <location>
        <begin position="207"/>
        <end position="241"/>
    </location>
</feature>
<feature type="repeat" description="PPR 4">
    <location>
        <begin position="244"/>
        <end position="266"/>
    </location>
</feature>
<feature type="repeat" description="PPR 5">
    <location>
        <begin position="275"/>
        <end position="305"/>
    </location>
</feature>
<feature type="repeat" description="PPR 6">
    <location>
        <begin position="306"/>
        <end position="340"/>
    </location>
</feature>
<feature type="repeat" description="PPR 7">
    <location>
        <begin position="341"/>
        <end position="375"/>
    </location>
</feature>
<feature type="repeat" description="PPR 8">
    <location>
        <begin position="376"/>
        <end position="406"/>
    </location>
</feature>
<feature type="repeat" description="PPR 9">
    <location>
        <begin position="407"/>
        <end position="437"/>
    </location>
</feature>
<feature type="repeat" description="PPR 10">
    <location>
        <begin position="441"/>
        <end position="471"/>
    </location>
</feature>
<feature type="repeat" description="PPR 11">
    <location>
        <begin position="477"/>
        <end position="507"/>
    </location>
</feature>
<feature type="region of interest" description="Type E motif">
    <location>
        <begin position="512"/>
        <end position="588"/>
    </location>
</feature>